<keyword id="KW-0539">Nucleus</keyword>
<keyword id="KW-0677">Repeat</keyword>
<keyword id="KW-0853">WD repeat</keyword>
<gene>
    <name type="primary">JIP5</name>
    <name type="ORF">SCY_5872</name>
</gene>
<evidence type="ECO:0000250" key="1"/>
<evidence type="ECO:0000256" key="2">
    <source>
        <dbReference type="SAM" id="MobiDB-lite"/>
    </source>
</evidence>
<evidence type="ECO:0000305" key="3"/>
<accession>A6ZX45</accession>
<name>JIP5_YEAS7</name>
<comment type="subunit">
    <text>Interacts with BRE1, BUD27 and GIS1.</text>
</comment>
<comment type="subcellular location">
    <subcellularLocation>
        <location evidence="1">Nucleus</location>
        <location evidence="1">Nucleolus</location>
    </subcellularLocation>
</comment>
<comment type="similarity">
    <text evidence="3">Belongs to the WD repeat WDR55 family.</text>
</comment>
<comment type="sequence caution" evidence="3">
    <conflict type="erroneous initiation">
        <sequence resource="EMBL-CDS" id="EDN61287"/>
    </conflict>
</comment>
<sequence length="492" mass="55252">MAKSKKKTDVVDSTNLPILELLSLKAPIFQSLLHPELPIIITGFGTGHIVCHRYDPAKLQSHLDRRRRIDTATTGKDAKKGVCPWIRLDIDLETGDLKLVDIEEQHQQKQTGKDEDLGVKTLWKTKRHKGSVRAMCFDSKGDNIFSVGSDNVLKKANTMTGKVVKKVNLSSLFNSEEKKNDKFTKLCASQTHPFILIGDESGNIHVINSENLALSNSIRSIHFGDSINDIFHFDKRSAYKFISLGQTTLAYFDVRDKDAKPNVAGNEDGKILISDDQEDEVLCGCFVDPEVADTLLCGMGEGIVTVWKPNKNDLEDQMSRIKISKDESIDCIVPTLQDDNCVWCGCSNGNIYKVNAKLGKVVEVRNHNELDEVSFVDLDFEYRVVSGGLENIKIWELSSDDVEENASVESDSDEPLSHSDEDLSDDTSSDDETTLVGLSKEELLDELDKDLKEDHQEEKESNSKSVKKRKIMKENNKKKDLYEHGIKKFDDL</sequence>
<feature type="chain" id="PRO_0000333543" description="WD repeat-containing protein JIP5">
    <location>
        <begin position="1"/>
        <end position="492"/>
    </location>
</feature>
<feature type="repeat" description="WD 1">
    <location>
        <begin position="127"/>
        <end position="166"/>
    </location>
</feature>
<feature type="repeat" description="WD 2">
    <location>
        <begin position="178"/>
        <end position="217"/>
    </location>
</feature>
<feature type="repeat" description="WD 3">
    <location>
        <begin position="236"/>
        <end position="274"/>
    </location>
</feature>
<feature type="repeat" description="WD 4">
    <location>
        <begin position="276"/>
        <end position="317"/>
    </location>
</feature>
<feature type="repeat" description="WD 5">
    <location>
        <begin position="365"/>
        <end position="405"/>
    </location>
</feature>
<feature type="region of interest" description="Disordered" evidence="2">
    <location>
        <begin position="404"/>
        <end position="472"/>
    </location>
</feature>
<feature type="compositionally biased region" description="Acidic residues" evidence="2">
    <location>
        <begin position="404"/>
        <end position="414"/>
    </location>
</feature>
<feature type="compositionally biased region" description="Acidic residues" evidence="2">
    <location>
        <begin position="422"/>
        <end position="433"/>
    </location>
</feature>
<feature type="compositionally biased region" description="Basic and acidic residues" evidence="2">
    <location>
        <begin position="449"/>
        <end position="462"/>
    </location>
</feature>
<dbReference type="EMBL" id="AAFW02000135">
    <property type="protein sequence ID" value="EDN61287.1"/>
    <property type="status" value="ALT_INIT"/>
    <property type="molecule type" value="Genomic_DNA"/>
</dbReference>
<dbReference type="SMR" id="A6ZX45"/>
<dbReference type="HOGENOM" id="CLU_035623_0_0_1"/>
<dbReference type="OrthoDB" id="39122at4893"/>
<dbReference type="Proteomes" id="UP000007060">
    <property type="component" value="Unassembled WGS sequence"/>
</dbReference>
<dbReference type="GO" id="GO:0005730">
    <property type="term" value="C:nucleolus"/>
    <property type="evidence" value="ECO:0007669"/>
    <property type="project" value="UniProtKB-SubCell"/>
</dbReference>
<dbReference type="FunFam" id="2.130.10.10:FF:002181">
    <property type="entry name" value="WD repeat-containing protein JIP5"/>
    <property type="match status" value="1"/>
</dbReference>
<dbReference type="Gene3D" id="2.130.10.10">
    <property type="entry name" value="YVTN repeat-like/Quinoprotein amine dehydrogenase"/>
    <property type="match status" value="2"/>
</dbReference>
<dbReference type="InterPro" id="IPR015943">
    <property type="entry name" value="WD40/YVTN_repeat-like_dom_sf"/>
</dbReference>
<dbReference type="InterPro" id="IPR036322">
    <property type="entry name" value="WD40_repeat_dom_sf"/>
</dbReference>
<dbReference type="InterPro" id="IPR051179">
    <property type="entry name" value="WD_repeat_multifunction"/>
</dbReference>
<dbReference type="PANTHER" id="PTHR19857:SF8">
    <property type="entry name" value="ANGIO-ASSOCIATED MIGRATORY CELL PROTEIN"/>
    <property type="match status" value="1"/>
</dbReference>
<dbReference type="PANTHER" id="PTHR19857">
    <property type="entry name" value="MITOCHONDRIAL DIVISION PROTEIN 1-RELATED"/>
    <property type="match status" value="1"/>
</dbReference>
<dbReference type="SUPFAM" id="SSF50978">
    <property type="entry name" value="WD40 repeat-like"/>
    <property type="match status" value="1"/>
</dbReference>
<protein>
    <recommendedName>
        <fullName>WD repeat-containing protein JIP5</fullName>
    </recommendedName>
    <alternativeName>
        <fullName>Jumonji domain-interacting protein 5</fullName>
    </alternativeName>
</protein>
<proteinExistence type="inferred from homology"/>
<reference key="1">
    <citation type="journal article" date="2007" name="Proc. Natl. Acad. Sci. U.S.A.">
        <title>Genome sequencing and comparative analysis of Saccharomyces cerevisiae strain YJM789.</title>
        <authorList>
            <person name="Wei W."/>
            <person name="McCusker J.H."/>
            <person name="Hyman R.W."/>
            <person name="Jones T."/>
            <person name="Ning Y."/>
            <person name="Cao Z."/>
            <person name="Gu Z."/>
            <person name="Bruno D."/>
            <person name="Miranda M."/>
            <person name="Nguyen M."/>
            <person name="Wilhelmy J."/>
            <person name="Komp C."/>
            <person name="Tamse R."/>
            <person name="Wang X."/>
            <person name="Jia P."/>
            <person name="Luedi P."/>
            <person name="Oefner P.J."/>
            <person name="David L."/>
            <person name="Dietrich F.S."/>
            <person name="Li Y."/>
            <person name="Davis R.W."/>
            <person name="Steinmetz L.M."/>
        </authorList>
    </citation>
    <scope>NUCLEOTIDE SEQUENCE [LARGE SCALE GENOMIC DNA]</scope>
    <source>
        <strain>YJM789</strain>
    </source>
</reference>
<organism>
    <name type="scientific">Saccharomyces cerevisiae (strain YJM789)</name>
    <name type="common">Baker's yeast</name>
    <dbReference type="NCBI Taxonomy" id="307796"/>
    <lineage>
        <taxon>Eukaryota</taxon>
        <taxon>Fungi</taxon>
        <taxon>Dikarya</taxon>
        <taxon>Ascomycota</taxon>
        <taxon>Saccharomycotina</taxon>
        <taxon>Saccharomycetes</taxon>
        <taxon>Saccharomycetales</taxon>
        <taxon>Saccharomycetaceae</taxon>
        <taxon>Saccharomyces</taxon>
    </lineage>
</organism>